<sequence length="921" mass="100065">MSTNEQLAWDFDDGDVAEVRPDTGIARFAPGSEQWIAALQPTDDDAIRLDRFDVNTMTAEAAARLWARVAAWVESDQIAYYIDDSPVSSDAAYDARMRCLERLEAAFPSLDNPQSPTHRVGGSFSNDFVSVRHPSRMMSLDDVFSIEELKDWYDSVIRDLDWPESKPLPMSCEVKIDGLALNLIYRNGVLEQGLTRGDGVTGEDITLNVRTIGSIPANLGGPKEDVPDFVEIRGEVFMRWDDFHTLNNEQEDAGRAPFANPRNAAAGSLRQKDPRITATRRLSFYAHGLGQLTWGADHPRGTHDVVADQSQAYDLYTRWGVPVSPHNRAVTSFQEILDMIEYYGEHRGDIEHALDGIVVKVDDLGLQRTLGATSRAPRWAIAYKYPPEEVNTELLNITVQVGRTGRVTPVAVLKPVYVAGSTVARTTLHNGFEVKRKGVLIGDTVVVRKAGDVIPELVGPVLERRKGREDQLREFVMPEFCPSCGAKLAPAKEGDKDIRCPNVESCPAQLTERVISLASRKAFDIEHLGEQSAIALTNPEENRPDSVATYAPNITEVLVAPGEEPDPYEPVEGLELPAAQKPVLSNESGLFDLTAADLRDVRVWREAAIVEVHETVGANGKKKKVRKRVGGSGLWHQVPAFWTAPTPAKKLTAKQLAERAQREAAIESAETQGGAASETTGAPTGAEAPLGTMPGFAAASYPEYDVPADAVIVRVDHKTTRTGVTDVPVIIRPGENTRKMFDEMDKARHADLWRVLVALSIRRLGPPTARLIASAMGSLAAIEKATIEDLTAIDGVGPEIAESVVNWFAATREPGDWRGATLRAWQAAGVGVDEAETSSLPQTLAGKTVVVTGSLEGYSRDSAKEAIIERGGKAAGSVSKKTDYVVIGANAGSKAIKAEELGIPMLGEIQFAQLLETGSID</sequence>
<evidence type="ECO:0000255" key="1">
    <source>
        <dbReference type="HAMAP-Rule" id="MF_01588"/>
    </source>
</evidence>
<evidence type="ECO:0000256" key="2">
    <source>
        <dbReference type="SAM" id="MobiDB-lite"/>
    </source>
</evidence>
<protein>
    <recommendedName>
        <fullName evidence="1">DNA ligase</fullName>
        <ecNumber evidence="1">6.5.1.2</ecNumber>
    </recommendedName>
    <alternativeName>
        <fullName evidence="1">Polydeoxyribonucleotide synthase [NAD(+)]</fullName>
    </alternativeName>
</protein>
<gene>
    <name evidence="1" type="primary">ligA</name>
    <name type="ordered locus">Blon_0730</name>
    <name type="ordered locus">BLIJ_0742</name>
</gene>
<dbReference type="EC" id="6.5.1.2" evidence="1"/>
<dbReference type="EMBL" id="CP001095">
    <property type="protein sequence ID" value="ACJ51834.1"/>
    <property type="molecule type" value="Genomic_DNA"/>
</dbReference>
<dbReference type="EMBL" id="AP010889">
    <property type="protein sequence ID" value="BAJ68334.1"/>
    <property type="molecule type" value="Genomic_DNA"/>
</dbReference>
<dbReference type="RefSeq" id="WP_012577120.1">
    <property type="nucleotide sequence ID" value="NC_011593.1"/>
</dbReference>
<dbReference type="SMR" id="B7GPV4"/>
<dbReference type="KEGG" id="bln:Blon_0730"/>
<dbReference type="KEGG" id="blon:BLIJ_0742"/>
<dbReference type="PATRIC" id="fig|391904.8.peg.746"/>
<dbReference type="HOGENOM" id="CLU_007764_1_1_11"/>
<dbReference type="Proteomes" id="UP000001360">
    <property type="component" value="Chromosome"/>
</dbReference>
<dbReference type="GO" id="GO:0005829">
    <property type="term" value="C:cytosol"/>
    <property type="evidence" value="ECO:0007669"/>
    <property type="project" value="TreeGrafter"/>
</dbReference>
<dbReference type="GO" id="GO:0003911">
    <property type="term" value="F:DNA ligase (NAD+) activity"/>
    <property type="evidence" value="ECO:0007669"/>
    <property type="project" value="UniProtKB-UniRule"/>
</dbReference>
<dbReference type="GO" id="GO:0046872">
    <property type="term" value="F:metal ion binding"/>
    <property type="evidence" value="ECO:0007669"/>
    <property type="project" value="UniProtKB-KW"/>
</dbReference>
<dbReference type="GO" id="GO:0006281">
    <property type="term" value="P:DNA repair"/>
    <property type="evidence" value="ECO:0007669"/>
    <property type="project" value="UniProtKB-KW"/>
</dbReference>
<dbReference type="GO" id="GO:0006260">
    <property type="term" value="P:DNA replication"/>
    <property type="evidence" value="ECO:0007669"/>
    <property type="project" value="UniProtKB-KW"/>
</dbReference>
<dbReference type="CDD" id="cd17748">
    <property type="entry name" value="BRCT_DNA_ligase_like"/>
    <property type="match status" value="1"/>
</dbReference>
<dbReference type="CDD" id="cd00114">
    <property type="entry name" value="LIGANc"/>
    <property type="match status" value="1"/>
</dbReference>
<dbReference type="FunFam" id="2.40.50.140:FF:000012">
    <property type="entry name" value="DNA ligase"/>
    <property type="match status" value="1"/>
</dbReference>
<dbReference type="FunFam" id="3.30.470.30:FF:000001">
    <property type="entry name" value="DNA ligase"/>
    <property type="match status" value="1"/>
</dbReference>
<dbReference type="Gene3D" id="6.20.10.30">
    <property type="match status" value="1"/>
</dbReference>
<dbReference type="Gene3D" id="1.10.150.20">
    <property type="entry name" value="5' to 3' exonuclease, C-terminal subdomain"/>
    <property type="match status" value="2"/>
</dbReference>
<dbReference type="Gene3D" id="3.40.50.10190">
    <property type="entry name" value="BRCT domain"/>
    <property type="match status" value="1"/>
</dbReference>
<dbReference type="Gene3D" id="3.30.470.30">
    <property type="entry name" value="DNA ligase/mRNA capping enzyme"/>
    <property type="match status" value="1"/>
</dbReference>
<dbReference type="Gene3D" id="1.10.287.610">
    <property type="entry name" value="Helix hairpin bin"/>
    <property type="match status" value="1"/>
</dbReference>
<dbReference type="Gene3D" id="2.40.50.140">
    <property type="entry name" value="Nucleic acid-binding proteins"/>
    <property type="match status" value="1"/>
</dbReference>
<dbReference type="HAMAP" id="MF_01588">
    <property type="entry name" value="DNA_ligase_A"/>
    <property type="match status" value="1"/>
</dbReference>
<dbReference type="InterPro" id="IPR001357">
    <property type="entry name" value="BRCT_dom"/>
</dbReference>
<dbReference type="InterPro" id="IPR036420">
    <property type="entry name" value="BRCT_dom_sf"/>
</dbReference>
<dbReference type="InterPro" id="IPR041663">
    <property type="entry name" value="DisA/LigA_HHH"/>
</dbReference>
<dbReference type="InterPro" id="IPR001679">
    <property type="entry name" value="DNA_ligase"/>
</dbReference>
<dbReference type="InterPro" id="IPR018239">
    <property type="entry name" value="DNA_ligase_AS"/>
</dbReference>
<dbReference type="InterPro" id="IPR033136">
    <property type="entry name" value="DNA_ligase_CS"/>
</dbReference>
<dbReference type="InterPro" id="IPR013839">
    <property type="entry name" value="DNAligase_adenylation"/>
</dbReference>
<dbReference type="InterPro" id="IPR013840">
    <property type="entry name" value="DNAligase_N"/>
</dbReference>
<dbReference type="InterPro" id="IPR012340">
    <property type="entry name" value="NA-bd_OB-fold"/>
</dbReference>
<dbReference type="InterPro" id="IPR004150">
    <property type="entry name" value="NAD_DNA_ligase_OB"/>
</dbReference>
<dbReference type="InterPro" id="IPR010994">
    <property type="entry name" value="RuvA_2-like"/>
</dbReference>
<dbReference type="InterPro" id="IPR004149">
    <property type="entry name" value="Znf_DNAligase_C4"/>
</dbReference>
<dbReference type="NCBIfam" id="TIGR00575">
    <property type="entry name" value="dnlj"/>
    <property type="match status" value="1"/>
</dbReference>
<dbReference type="NCBIfam" id="NF005932">
    <property type="entry name" value="PRK07956.1"/>
    <property type="match status" value="1"/>
</dbReference>
<dbReference type="PANTHER" id="PTHR23389">
    <property type="entry name" value="CHROMOSOME TRANSMISSION FIDELITY FACTOR 18"/>
    <property type="match status" value="1"/>
</dbReference>
<dbReference type="PANTHER" id="PTHR23389:SF9">
    <property type="entry name" value="DNA LIGASE"/>
    <property type="match status" value="1"/>
</dbReference>
<dbReference type="Pfam" id="PF00533">
    <property type="entry name" value="BRCT"/>
    <property type="match status" value="1"/>
</dbReference>
<dbReference type="Pfam" id="PF01653">
    <property type="entry name" value="DNA_ligase_aden"/>
    <property type="match status" value="1"/>
</dbReference>
<dbReference type="Pfam" id="PF03120">
    <property type="entry name" value="DNA_ligase_OB"/>
    <property type="match status" value="1"/>
</dbReference>
<dbReference type="Pfam" id="PF03119">
    <property type="entry name" value="DNA_ligase_ZBD"/>
    <property type="match status" value="1"/>
</dbReference>
<dbReference type="Pfam" id="PF12826">
    <property type="entry name" value="HHH_2"/>
    <property type="match status" value="1"/>
</dbReference>
<dbReference type="SMART" id="SM00292">
    <property type="entry name" value="BRCT"/>
    <property type="match status" value="1"/>
</dbReference>
<dbReference type="SMART" id="SM00532">
    <property type="entry name" value="LIGANc"/>
    <property type="match status" value="1"/>
</dbReference>
<dbReference type="SUPFAM" id="SSF52113">
    <property type="entry name" value="BRCT domain"/>
    <property type="match status" value="1"/>
</dbReference>
<dbReference type="SUPFAM" id="SSF56091">
    <property type="entry name" value="DNA ligase/mRNA capping enzyme, catalytic domain"/>
    <property type="match status" value="1"/>
</dbReference>
<dbReference type="SUPFAM" id="SSF50249">
    <property type="entry name" value="Nucleic acid-binding proteins"/>
    <property type="match status" value="1"/>
</dbReference>
<dbReference type="SUPFAM" id="SSF47781">
    <property type="entry name" value="RuvA domain 2-like"/>
    <property type="match status" value="2"/>
</dbReference>
<dbReference type="PROSITE" id="PS50172">
    <property type="entry name" value="BRCT"/>
    <property type="match status" value="1"/>
</dbReference>
<dbReference type="PROSITE" id="PS01055">
    <property type="entry name" value="DNA_LIGASE_N1"/>
    <property type="match status" value="1"/>
</dbReference>
<dbReference type="PROSITE" id="PS01056">
    <property type="entry name" value="DNA_LIGASE_N2"/>
    <property type="match status" value="1"/>
</dbReference>
<keyword id="KW-0227">DNA damage</keyword>
<keyword id="KW-0234">DNA repair</keyword>
<keyword id="KW-0235">DNA replication</keyword>
<keyword id="KW-0436">Ligase</keyword>
<keyword id="KW-0460">Magnesium</keyword>
<keyword id="KW-0464">Manganese</keyword>
<keyword id="KW-0479">Metal-binding</keyword>
<keyword id="KW-0520">NAD</keyword>
<keyword id="KW-0862">Zinc</keyword>
<feature type="chain" id="PRO_0000380309" description="DNA ligase">
    <location>
        <begin position="1"/>
        <end position="921"/>
    </location>
</feature>
<feature type="domain" description="BRCT" evidence="1">
    <location>
        <begin position="839"/>
        <end position="921"/>
    </location>
</feature>
<feature type="region of interest" description="Disordered" evidence="2">
    <location>
        <begin position="663"/>
        <end position="688"/>
    </location>
</feature>
<feature type="active site" description="N6-AMP-lysine intermediate" evidence="1">
    <location>
        <position position="175"/>
    </location>
</feature>
<feature type="binding site" evidence="1">
    <location>
        <begin position="90"/>
        <end position="94"/>
    </location>
    <ligand>
        <name>NAD(+)</name>
        <dbReference type="ChEBI" id="CHEBI:57540"/>
    </ligand>
</feature>
<feature type="binding site" evidence="1">
    <location>
        <begin position="139"/>
        <end position="140"/>
    </location>
    <ligand>
        <name>NAD(+)</name>
        <dbReference type="ChEBI" id="CHEBI:57540"/>
    </ligand>
</feature>
<feature type="binding site" evidence="1">
    <location>
        <position position="173"/>
    </location>
    <ligand>
        <name>NAD(+)</name>
        <dbReference type="ChEBI" id="CHEBI:57540"/>
    </ligand>
</feature>
<feature type="binding site" evidence="1">
    <location>
        <position position="196"/>
    </location>
    <ligand>
        <name>NAD(+)</name>
        <dbReference type="ChEBI" id="CHEBI:57540"/>
    </ligand>
</feature>
<feature type="binding site" evidence="1">
    <location>
        <position position="235"/>
    </location>
    <ligand>
        <name>NAD(+)</name>
        <dbReference type="ChEBI" id="CHEBI:57540"/>
    </ligand>
</feature>
<feature type="binding site" evidence="1">
    <location>
        <position position="360"/>
    </location>
    <ligand>
        <name>NAD(+)</name>
        <dbReference type="ChEBI" id="CHEBI:57540"/>
    </ligand>
</feature>
<feature type="binding site" evidence="1">
    <location>
        <position position="384"/>
    </location>
    <ligand>
        <name>NAD(+)</name>
        <dbReference type="ChEBI" id="CHEBI:57540"/>
    </ligand>
</feature>
<feature type="binding site" evidence="1">
    <location>
        <position position="481"/>
    </location>
    <ligand>
        <name>Zn(2+)</name>
        <dbReference type="ChEBI" id="CHEBI:29105"/>
    </ligand>
</feature>
<feature type="binding site" evidence="1">
    <location>
        <position position="484"/>
    </location>
    <ligand>
        <name>Zn(2+)</name>
        <dbReference type="ChEBI" id="CHEBI:29105"/>
    </ligand>
</feature>
<feature type="binding site" evidence="1">
    <location>
        <position position="500"/>
    </location>
    <ligand>
        <name>Zn(2+)</name>
        <dbReference type="ChEBI" id="CHEBI:29105"/>
    </ligand>
</feature>
<feature type="binding site" evidence="1">
    <location>
        <position position="506"/>
    </location>
    <ligand>
        <name>Zn(2+)</name>
        <dbReference type="ChEBI" id="CHEBI:29105"/>
    </ligand>
</feature>
<proteinExistence type="inferred from homology"/>
<comment type="function">
    <text evidence="1">DNA ligase that catalyzes the formation of phosphodiester linkages between 5'-phosphoryl and 3'-hydroxyl groups in double-stranded DNA using NAD as a coenzyme and as the energy source for the reaction. It is essential for DNA replication and repair of damaged DNA.</text>
</comment>
<comment type="catalytic activity">
    <reaction evidence="1">
        <text>NAD(+) + (deoxyribonucleotide)n-3'-hydroxyl + 5'-phospho-(deoxyribonucleotide)m = (deoxyribonucleotide)n+m + AMP + beta-nicotinamide D-nucleotide.</text>
        <dbReference type="EC" id="6.5.1.2"/>
    </reaction>
</comment>
<comment type="cofactor">
    <cofactor evidence="1">
        <name>Mg(2+)</name>
        <dbReference type="ChEBI" id="CHEBI:18420"/>
    </cofactor>
    <cofactor evidence="1">
        <name>Mn(2+)</name>
        <dbReference type="ChEBI" id="CHEBI:29035"/>
    </cofactor>
</comment>
<comment type="similarity">
    <text evidence="1">Belongs to the NAD-dependent DNA ligase family. LigA subfamily.</text>
</comment>
<name>DNLJ_BIFLS</name>
<organism>
    <name type="scientific">Bifidobacterium longum subsp. infantis (strain ATCC 15697 / DSM 20088 / JCM 1222 / NCTC 11817 / S12)</name>
    <dbReference type="NCBI Taxonomy" id="391904"/>
    <lineage>
        <taxon>Bacteria</taxon>
        <taxon>Bacillati</taxon>
        <taxon>Actinomycetota</taxon>
        <taxon>Actinomycetes</taxon>
        <taxon>Bifidobacteriales</taxon>
        <taxon>Bifidobacteriaceae</taxon>
        <taxon>Bifidobacterium</taxon>
    </lineage>
</organism>
<reference key="1">
    <citation type="journal article" date="2008" name="Proc. Natl. Acad. Sci. U.S.A.">
        <title>The genome sequence of Bifidobacterium longum subsp. infantis reveals adaptations for milk utilization within the infant microbiome.</title>
        <authorList>
            <person name="Sela D.A."/>
            <person name="Chapman J."/>
            <person name="Adeuya A."/>
            <person name="Kim J.H."/>
            <person name="Chen F."/>
            <person name="Whitehead T.R."/>
            <person name="Lapidus A."/>
            <person name="Rokhsar D.S."/>
            <person name="Lebrilla C.B."/>
            <person name="German J.B."/>
            <person name="Price N.P."/>
            <person name="Richardson P.M."/>
            <person name="Mills D.A."/>
        </authorList>
    </citation>
    <scope>NUCLEOTIDE SEQUENCE [LARGE SCALE GENOMIC DNA]</scope>
    <source>
        <strain>ATCC 15697 / DSM 20088 / JCM 1222 / NCTC 11817 / S12</strain>
    </source>
</reference>
<reference key="2">
    <citation type="journal article" date="2011" name="Nature">
        <title>Bifidobacteria can protect from enteropathogenic infection through production of acetate.</title>
        <authorList>
            <person name="Fukuda S."/>
            <person name="Toh H."/>
            <person name="Hase K."/>
            <person name="Oshima K."/>
            <person name="Nakanishi Y."/>
            <person name="Yoshimura K."/>
            <person name="Tobe T."/>
            <person name="Clarke J.M."/>
            <person name="Topping D.L."/>
            <person name="Suzuki T."/>
            <person name="Taylor T.D."/>
            <person name="Itoh K."/>
            <person name="Kikuchi J."/>
            <person name="Morita H."/>
            <person name="Hattori M."/>
            <person name="Ohno H."/>
        </authorList>
    </citation>
    <scope>NUCLEOTIDE SEQUENCE [LARGE SCALE GENOMIC DNA]</scope>
    <source>
        <strain>ATCC 15697 / DSM 20088 / JCM 1222 / NCTC 11817 / S12</strain>
    </source>
</reference>
<accession>B7GPV4</accession>
<accession>E8MQQ9</accession>